<proteinExistence type="evidence at protein level"/>
<gene>
    <name type="primary">DERM1</name>
</gene>
<comment type="function">
    <text>Thiol protease that hydrolyzes proteins, with a preference for Phe or basic residues.</text>
</comment>
<comment type="catalytic activity">
    <reaction>
        <text>Broad endopeptidase specificity.</text>
        <dbReference type="EC" id="3.4.22.65"/>
    </reaction>
</comment>
<comment type="subcellular location">
    <subcellularLocation>
        <location>Secreted</location>
    </subcellularLocation>
</comment>
<comment type="allergen">
    <text>Causes an allergic reaction in human. Common symptoms of mite allergy are bronchial asthma, allergic rhinitis and conjunctivitis.</text>
</comment>
<comment type="similarity">
    <text evidence="1 2 3">Belongs to the peptidase C1 family.</text>
</comment>
<evidence type="ECO:0000255" key="1">
    <source>
        <dbReference type="PROSITE-ProRule" id="PRU10088"/>
    </source>
</evidence>
<evidence type="ECO:0000255" key="2">
    <source>
        <dbReference type="PROSITE-ProRule" id="PRU10089"/>
    </source>
</evidence>
<evidence type="ECO:0000255" key="3">
    <source>
        <dbReference type="PROSITE-ProRule" id="PRU10090"/>
    </source>
</evidence>
<accession>P16312</accession>
<sequence>TQACRINSGNVPSELDLRSLRTVTPIRMQG</sequence>
<feature type="chain" id="PRO_0000050547" description="Peptidase 1">
    <location>
        <begin position="1"/>
        <end position="30" status="greater than"/>
    </location>
</feature>
<feature type="non-terminal residue">
    <location>
        <position position="30"/>
    </location>
</feature>
<organism>
    <name type="scientific">Dermatophagoides microceras</name>
    <name type="common">House dust mite</name>
    <dbReference type="NCBI Taxonomy" id="6955"/>
    <lineage>
        <taxon>Eukaryota</taxon>
        <taxon>Metazoa</taxon>
        <taxon>Ecdysozoa</taxon>
        <taxon>Arthropoda</taxon>
        <taxon>Chelicerata</taxon>
        <taxon>Arachnida</taxon>
        <taxon>Acari</taxon>
        <taxon>Acariformes</taxon>
        <taxon>Sarcoptiformes</taxon>
        <taxon>Astigmata</taxon>
        <taxon>Psoroptidia</taxon>
        <taxon>Analgoidea</taxon>
        <taxon>Pyroglyphidae</taxon>
        <taxon>Dermatophagoidinae</taxon>
        <taxon>Dermatophagoides</taxon>
    </lineage>
</organism>
<reference key="1">
    <citation type="journal article" date="1988" name="J. Immunol.">
        <title>The binding of mouse hybridoma and human IgE antibodies to the major fecal allergen, Der p I, of Dermatophagoides pteronyssinus. Relative binding site location and species specificity studied by solid-phase inhibition assays with radiolabeled antigen.</title>
        <authorList>
            <person name="Lind P."/>
            <person name="Hansen O.C."/>
            <person name="Horn N."/>
        </authorList>
    </citation>
    <scope>PROTEIN SEQUENCE</scope>
</reference>
<keyword id="KW-0020">Allergen</keyword>
<keyword id="KW-0903">Direct protein sequencing</keyword>
<keyword id="KW-0378">Hydrolase</keyword>
<keyword id="KW-0645">Protease</keyword>
<keyword id="KW-0964">Secreted</keyword>
<keyword id="KW-0788">Thiol protease</keyword>
<protein>
    <recommendedName>
        <fullName>Peptidase 1</fullName>
        <ecNumber>3.4.22.65</ecNumber>
    </recommendedName>
    <alternativeName>
        <fullName>Allergen Der m I</fullName>
    </alternativeName>
    <alternativeName>
        <fullName>Major mite fecal allergen Der m 1</fullName>
    </alternativeName>
    <allergenName>Der m 1</allergenName>
</protein>
<name>PEPT1_DERMI</name>
<dbReference type="EC" id="3.4.22.65"/>
<dbReference type="PIR" id="B27634">
    <property type="entry name" value="B27634"/>
</dbReference>
<dbReference type="Allergome" id="309">
    <property type="allergen name" value="Der m 1"/>
</dbReference>
<dbReference type="Allergome" id="3257">
    <property type="allergen name" value="Der m 1.0101"/>
</dbReference>
<dbReference type="MEROPS" id="C01.027"/>
<dbReference type="GO" id="GO:0005576">
    <property type="term" value="C:extracellular region"/>
    <property type="evidence" value="ECO:0007669"/>
    <property type="project" value="UniProtKB-SubCell"/>
</dbReference>
<dbReference type="GO" id="GO:0008234">
    <property type="term" value="F:cysteine-type peptidase activity"/>
    <property type="evidence" value="ECO:0007669"/>
    <property type="project" value="UniProtKB-KW"/>
</dbReference>
<dbReference type="GO" id="GO:0006508">
    <property type="term" value="P:proteolysis"/>
    <property type="evidence" value="ECO:0007669"/>
    <property type="project" value="UniProtKB-KW"/>
</dbReference>